<comment type="function">
    <text evidence="1">Binds together with bS18 to 16S ribosomal RNA.</text>
</comment>
<comment type="similarity">
    <text evidence="1">Belongs to the bacterial ribosomal protein bS6 family.</text>
</comment>
<dbReference type="EMBL" id="CP000698">
    <property type="protein sequence ID" value="ABQ27831.1"/>
    <property type="molecule type" value="Genomic_DNA"/>
</dbReference>
<dbReference type="RefSeq" id="WP_011940484.1">
    <property type="nucleotide sequence ID" value="NC_009483.1"/>
</dbReference>
<dbReference type="SMR" id="A5G7R3"/>
<dbReference type="STRING" id="351605.Gura_3678"/>
<dbReference type="KEGG" id="gur:Gura_3678"/>
<dbReference type="HOGENOM" id="CLU_113441_4_1_7"/>
<dbReference type="OrthoDB" id="9812702at2"/>
<dbReference type="Proteomes" id="UP000006695">
    <property type="component" value="Chromosome"/>
</dbReference>
<dbReference type="GO" id="GO:0022627">
    <property type="term" value="C:cytosolic small ribosomal subunit"/>
    <property type="evidence" value="ECO:0007669"/>
    <property type="project" value="TreeGrafter"/>
</dbReference>
<dbReference type="GO" id="GO:0070181">
    <property type="term" value="F:small ribosomal subunit rRNA binding"/>
    <property type="evidence" value="ECO:0007669"/>
    <property type="project" value="TreeGrafter"/>
</dbReference>
<dbReference type="GO" id="GO:0003735">
    <property type="term" value="F:structural constituent of ribosome"/>
    <property type="evidence" value="ECO:0007669"/>
    <property type="project" value="InterPro"/>
</dbReference>
<dbReference type="GO" id="GO:0006412">
    <property type="term" value="P:translation"/>
    <property type="evidence" value="ECO:0007669"/>
    <property type="project" value="UniProtKB-UniRule"/>
</dbReference>
<dbReference type="CDD" id="cd00473">
    <property type="entry name" value="bS6"/>
    <property type="match status" value="1"/>
</dbReference>
<dbReference type="Gene3D" id="3.30.70.60">
    <property type="match status" value="1"/>
</dbReference>
<dbReference type="HAMAP" id="MF_00360">
    <property type="entry name" value="Ribosomal_bS6"/>
    <property type="match status" value="1"/>
</dbReference>
<dbReference type="InterPro" id="IPR000529">
    <property type="entry name" value="Ribosomal_bS6"/>
</dbReference>
<dbReference type="InterPro" id="IPR035980">
    <property type="entry name" value="Ribosomal_bS6_sf"/>
</dbReference>
<dbReference type="InterPro" id="IPR020814">
    <property type="entry name" value="Ribosomal_S6_plastid/chlpt"/>
</dbReference>
<dbReference type="InterPro" id="IPR014717">
    <property type="entry name" value="Transl_elong_EF1B/ribsomal_bS6"/>
</dbReference>
<dbReference type="NCBIfam" id="TIGR00166">
    <property type="entry name" value="S6"/>
    <property type="match status" value="1"/>
</dbReference>
<dbReference type="PANTHER" id="PTHR21011">
    <property type="entry name" value="MITOCHONDRIAL 28S RIBOSOMAL PROTEIN S6"/>
    <property type="match status" value="1"/>
</dbReference>
<dbReference type="PANTHER" id="PTHR21011:SF1">
    <property type="entry name" value="SMALL RIBOSOMAL SUBUNIT PROTEIN BS6M"/>
    <property type="match status" value="1"/>
</dbReference>
<dbReference type="Pfam" id="PF01250">
    <property type="entry name" value="Ribosomal_S6"/>
    <property type="match status" value="1"/>
</dbReference>
<dbReference type="SUPFAM" id="SSF54995">
    <property type="entry name" value="Ribosomal protein S6"/>
    <property type="match status" value="1"/>
</dbReference>
<reference key="1">
    <citation type="submission" date="2007-05" db="EMBL/GenBank/DDBJ databases">
        <title>Complete sequence of Geobacter uraniireducens Rf4.</title>
        <authorList>
            <consortium name="US DOE Joint Genome Institute"/>
            <person name="Copeland A."/>
            <person name="Lucas S."/>
            <person name="Lapidus A."/>
            <person name="Barry K."/>
            <person name="Detter J.C."/>
            <person name="Glavina del Rio T."/>
            <person name="Hammon N."/>
            <person name="Israni S."/>
            <person name="Dalin E."/>
            <person name="Tice H."/>
            <person name="Pitluck S."/>
            <person name="Chertkov O."/>
            <person name="Brettin T."/>
            <person name="Bruce D."/>
            <person name="Han C."/>
            <person name="Schmutz J."/>
            <person name="Larimer F."/>
            <person name="Land M."/>
            <person name="Hauser L."/>
            <person name="Kyrpides N."/>
            <person name="Mikhailova N."/>
            <person name="Shelobolina E."/>
            <person name="Aklujkar M."/>
            <person name="Lovley D."/>
            <person name="Richardson P."/>
        </authorList>
    </citation>
    <scope>NUCLEOTIDE SEQUENCE [LARGE SCALE GENOMIC DNA]</scope>
    <source>
        <strain>ATCC BAA-1134 / JCM 13001 / Rf4</strain>
    </source>
</reference>
<sequence>MRMYETIFIVQPDLGEEEMKGISTKVQDVIASMKGDFKRLEDWGPRKLAYPINKFARGRYYYLRFDGDSALIAELERRLRLDDKVIRYQSVKLEKEVALAAAIPTKVAEEEAVESAEETKVETTTVEE</sequence>
<gene>
    <name evidence="1" type="primary">rpsF</name>
    <name type="ordered locus">Gura_3678</name>
</gene>
<accession>A5G7R3</accession>
<name>RS6_GEOUR</name>
<keyword id="KW-1185">Reference proteome</keyword>
<keyword id="KW-0687">Ribonucleoprotein</keyword>
<keyword id="KW-0689">Ribosomal protein</keyword>
<keyword id="KW-0694">RNA-binding</keyword>
<keyword id="KW-0699">rRNA-binding</keyword>
<organism>
    <name type="scientific">Geotalea uraniireducens (strain Rf4)</name>
    <name type="common">Geobacter uraniireducens</name>
    <dbReference type="NCBI Taxonomy" id="351605"/>
    <lineage>
        <taxon>Bacteria</taxon>
        <taxon>Pseudomonadati</taxon>
        <taxon>Thermodesulfobacteriota</taxon>
        <taxon>Desulfuromonadia</taxon>
        <taxon>Geobacterales</taxon>
        <taxon>Geobacteraceae</taxon>
        <taxon>Geotalea</taxon>
    </lineage>
</organism>
<protein>
    <recommendedName>
        <fullName evidence="1">Small ribosomal subunit protein bS6</fullName>
    </recommendedName>
    <alternativeName>
        <fullName evidence="2">30S ribosomal protein S6</fullName>
    </alternativeName>
</protein>
<proteinExistence type="inferred from homology"/>
<evidence type="ECO:0000255" key="1">
    <source>
        <dbReference type="HAMAP-Rule" id="MF_00360"/>
    </source>
</evidence>
<evidence type="ECO:0000305" key="2"/>
<feature type="chain" id="PRO_1000079448" description="Small ribosomal subunit protein bS6">
    <location>
        <begin position="1"/>
        <end position="128"/>
    </location>
</feature>